<sequence>MSSNTGGSDRELRCSFCAKGQDEVKRLIAGPGVYICDECVALCNEIVAHEDAGEREEMDRLLTPAEIKARLDEYVIGQHQAKKILSVAVHNHYKRVFYAEALGGEVELEKSNILLIGPSGSGKTLLAKTLARVLKVPFAIADATTLTEAGYVGEDVENILVQLLQNADYDIEAAAKGIIYIDEIDKISRKGDGPSITRDVSGEGVQQALLKIIEGTEANIPPKGGRKHPQQEFIRMDTSNILFILGGAFIGLDKIVDQRSGGGSMGFGAKVSNRKDRPLGELLDQVHPNDLVKFGLIPEFIGRIPVVTHVDELGEEDLIRILTEPKNALVRQYQKLFELDKVTLRFTANALKSIASQAIERKTGARGLRNVMENVMLDIMYSLPTLEGVKECIINRAVVEKGREPVLIYDTEAKTGS</sequence>
<dbReference type="EMBL" id="CP000527">
    <property type="protein sequence ID" value="ABM28750.1"/>
    <property type="molecule type" value="Genomic_DNA"/>
</dbReference>
<dbReference type="RefSeq" id="WP_010938631.1">
    <property type="nucleotide sequence ID" value="NC_008751.1"/>
</dbReference>
<dbReference type="SMR" id="A1VE84"/>
<dbReference type="KEGG" id="dvl:Dvul_1733"/>
<dbReference type="HOGENOM" id="CLU_014218_8_2_7"/>
<dbReference type="Proteomes" id="UP000009173">
    <property type="component" value="Chromosome"/>
</dbReference>
<dbReference type="GO" id="GO:0009376">
    <property type="term" value="C:HslUV protease complex"/>
    <property type="evidence" value="ECO:0007669"/>
    <property type="project" value="TreeGrafter"/>
</dbReference>
<dbReference type="GO" id="GO:0005524">
    <property type="term" value="F:ATP binding"/>
    <property type="evidence" value="ECO:0007669"/>
    <property type="project" value="UniProtKB-UniRule"/>
</dbReference>
<dbReference type="GO" id="GO:0016887">
    <property type="term" value="F:ATP hydrolysis activity"/>
    <property type="evidence" value="ECO:0007669"/>
    <property type="project" value="InterPro"/>
</dbReference>
<dbReference type="GO" id="GO:0140662">
    <property type="term" value="F:ATP-dependent protein folding chaperone"/>
    <property type="evidence" value="ECO:0007669"/>
    <property type="project" value="InterPro"/>
</dbReference>
<dbReference type="GO" id="GO:0046983">
    <property type="term" value="F:protein dimerization activity"/>
    <property type="evidence" value="ECO:0007669"/>
    <property type="project" value="InterPro"/>
</dbReference>
<dbReference type="GO" id="GO:0051082">
    <property type="term" value="F:unfolded protein binding"/>
    <property type="evidence" value="ECO:0007669"/>
    <property type="project" value="UniProtKB-UniRule"/>
</dbReference>
<dbReference type="GO" id="GO:0008270">
    <property type="term" value="F:zinc ion binding"/>
    <property type="evidence" value="ECO:0007669"/>
    <property type="project" value="InterPro"/>
</dbReference>
<dbReference type="GO" id="GO:0051301">
    <property type="term" value="P:cell division"/>
    <property type="evidence" value="ECO:0007669"/>
    <property type="project" value="TreeGrafter"/>
</dbReference>
<dbReference type="GO" id="GO:0051603">
    <property type="term" value="P:proteolysis involved in protein catabolic process"/>
    <property type="evidence" value="ECO:0007669"/>
    <property type="project" value="TreeGrafter"/>
</dbReference>
<dbReference type="CDD" id="cd19497">
    <property type="entry name" value="RecA-like_ClpX"/>
    <property type="match status" value="1"/>
</dbReference>
<dbReference type="FunFam" id="1.10.8.60:FF:000002">
    <property type="entry name" value="ATP-dependent Clp protease ATP-binding subunit ClpX"/>
    <property type="match status" value="1"/>
</dbReference>
<dbReference type="FunFam" id="3.40.50.300:FF:000005">
    <property type="entry name" value="ATP-dependent Clp protease ATP-binding subunit ClpX"/>
    <property type="match status" value="1"/>
</dbReference>
<dbReference type="Gene3D" id="1.10.8.60">
    <property type="match status" value="1"/>
</dbReference>
<dbReference type="Gene3D" id="6.20.220.10">
    <property type="entry name" value="ClpX chaperone, C4-type zinc finger domain"/>
    <property type="match status" value="1"/>
</dbReference>
<dbReference type="Gene3D" id="3.40.50.300">
    <property type="entry name" value="P-loop containing nucleotide triphosphate hydrolases"/>
    <property type="match status" value="1"/>
</dbReference>
<dbReference type="HAMAP" id="MF_00175">
    <property type="entry name" value="ClpX"/>
    <property type="match status" value="1"/>
</dbReference>
<dbReference type="InterPro" id="IPR003593">
    <property type="entry name" value="AAA+_ATPase"/>
</dbReference>
<dbReference type="InterPro" id="IPR050052">
    <property type="entry name" value="ATP-dep_Clp_protease_ClpX"/>
</dbReference>
<dbReference type="InterPro" id="IPR003959">
    <property type="entry name" value="ATPase_AAA_core"/>
</dbReference>
<dbReference type="InterPro" id="IPR019489">
    <property type="entry name" value="Clp_ATPase_C"/>
</dbReference>
<dbReference type="InterPro" id="IPR004487">
    <property type="entry name" value="Clp_protease_ATP-bd_su_ClpX"/>
</dbReference>
<dbReference type="InterPro" id="IPR046425">
    <property type="entry name" value="ClpX_bact"/>
</dbReference>
<dbReference type="InterPro" id="IPR027417">
    <property type="entry name" value="P-loop_NTPase"/>
</dbReference>
<dbReference type="InterPro" id="IPR010603">
    <property type="entry name" value="Znf_CppX_C4"/>
</dbReference>
<dbReference type="InterPro" id="IPR038366">
    <property type="entry name" value="Znf_CppX_C4_sf"/>
</dbReference>
<dbReference type="NCBIfam" id="TIGR00382">
    <property type="entry name" value="clpX"/>
    <property type="match status" value="1"/>
</dbReference>
<dbReference type="NCBIfam" id="NF003745">
    <property type="entry name" value="PRK05342.1"/>
    <property type="match status" value="1"/>
</dbReference>
<dbReference type="PANTHER" id="PTHR48102:SF7">
    <property type="entry name" value="ATP-DEPENDENT CLP PROTEASE ATP-BINDING SUBUNIT CLPX-LIKE, MITOCHONDRIAL"/>
    <property type="match status" value="1"/>
</dbReference>
<dbReference type="PANTHER" id="PTHR48102">
    <property type="entry name" value="ATP-DEPENDENT CLP PROTEASE ATP-BINDING SUBUNIT CLPX-LIKE, MITOCHONDRIAL-RELATED"/>
    <property type="match status" value="1"/>
</dbReference>
<dbReference type="Pfam" id="PF07724">
    <property type="entry name" value="AAA_2"/>
    <property type="match status" value="1"/>
</dbReference>
<dbReference type="Pfam" id="PF10431">
    <property type="entry name" value="ClpB_D2-small"/>
    <property type="match status" value="1"/>
</dbReference>
<dbReference type="Pfam" id="PF06689">
    <property type="entry name" value="zf-C4_ClpX"/>
    <property type="match status" value="1"/>
</dbReference>
<dbReference type="SMART" id="SM00382">
    <property type="entry name" value="AAA"/>
    <property type="match status" value="1"/>
</dbReference>
<dbReference type="SMART" id="SM01086">
    <property type="entry name" value="ClpB_D2-small"/>
    <property type="match status" value="1"/>
</dbReference>
<dbReference type="SMART" id="SM00994">
    <property type="entry name" value="zf-C4_ClpX"/>
    <property type="match status" value="1"/>
</dbReference>
<dbReference type="SUPFAM" id="SSF57716">
    <property type="entry name" value="Glucocorticoid receptor-like (DNA-binding domain)"/>
    <property type="match status" value="1"/>
</dbReference>
<dbReference type="SUPFAM" id="SSF52540">
    <property type="entry name" value="P-loop containing nucleoside triphosphate hydrolases"/>
    <property type="match status" value="1"/>
</dbReference>
<dbReference type="PROSITE" id="PS51902">
    <property type="entry name" value="CLPX_ZB"/>
    <property type="match status" value="1"/>
</dbReference>
<gene>
    <name evidence="1" type="primary">clpX</name>
    <name type="ordered locus">Dvul_1733</name>
</gene>
<evidence type="ECO:0000255" key="1">
    <source>
        <dbReference type="HAMAP-Rule" id="MF_00175"/>
    </source>
</evidence>
<evidence type="ECO:0000255" key="2">
    <source>
        <dbReference type="PROSITE-ProRule" id="PRU01250"/>
    </source>
</evidence>
<reference key="1">
    <citation type="journal article" date="2009" name="Environ. Microbiol.">
        <title>Contribution of mobile genetic elements to Desulfovibrio vulgaris genome plasticity.</title>
        <authorList>
            <person name="Walker C.B."/>
            <person name="Stolyar S."/>
            <person name="Chivian D."/>
            <person name="Pinel N."/>
            <person name="Gabster J.A."/>
            <person name="Dehal P.S."/>
            <person name="He Z."/>
            <person name="Yang Z.K."/>
            <person name="Yen H.C."/>
            <person name="Zhou J."/>
            <person name="Wall J.D."/>
            <person name="Hazen T.C."/>
            <person name="Arkin A.P."/>
            <person name="Stahl D.A."/>
        </authorList>
    </citation>
    <scope>NUCLEOTIDE SEQUENCE [LARGE SCALE GENOMIC DNA]</scope>
    <source>
        <strain>DP4</strain>
    </source>
</reference>
<keyword id="KW-0067">ATP-binding</keyword>
<keyword id="KW-0143">Chaperone</keyword>
<keyword id="KW-0479">Metal-binding</keyword>
<keyword id="KW-0547">Nucleotide-binding</keyword>
<keyword id="KW-0862">Zinc</keyword>
<comment type="function">
    <text evidence="1">ATP-dependent specificity component of the Clp protease. It directs the protease to specific substrates. Can perform chaperone functions in the absence of ClpP.</text>
</comment>
<comment type="subunit">
    <text evidence="1">Component of the ClpX-ClpP complex. Forms a hexameric ring that, in the presence of ATP, binds to fourteen ClpP subunits assembled into a disk-like structure with a central cavity, resembling the structure of eukaryotic proteasomes.</text>
</comment>
<comment type="similarity">
    <text evidence="1">Belongs to the ClpX chaperone family.</text>
</comment>
<feature type="chain" id="PRO_1000024549" description="ATP-dependent Clp protease ATP-binding subunit ClpX">
    <location>
        <begin position="1"/>
        <end position="417"/>
    </location>
</feature>
<feature type="domain" description="ClpX-type ZB" evidence="2">
    <location>
        <begin position="2"/>
        <end position="55"/>
    </location>
</feature>
<feature type="binding site" evidence="2">
    <location>
        <position position="14"/>
    </location>
    <ligand>
        <name>Zn(2+)</name>
        <dbReference type="ChEBI" id="CHEBI:29105"/>
    </ligand>
</feature>
<feature type="binding site" evidence="2">
    <location>
        <position position="17"/>
    </location>
    <ligand>
        <name>Zn(2+)</name>
        <dbReference type="ChEBI" id="CHEBI:29105"/>
    </ligand>
</feature>
<feature type="binding site" evidence="2">
    <location>
        <position position="36"/>
    </location>
    <ligand>
        <name>Zn(2+)</name>
        <dbReference type="ChEBI" id="CHEBI:29105"/>
    </ligand>
</feature>
<feature type="binding site" evidence="2">
    <location>
        <position position="39"/>
    </location>
    <ligand>
        <name>Zn(2+)</name>
        <dbReference type="ChEBI" id="CHEBI:29105"/>
    </ligand>
</feature>
<feature type="binding site" evidence="1">
    <location>
        <begin position="118"/>
        <end position="125"/>
    </location>
    <ligand>
        <name>ATP</name>
        <dbReference type="ChEBI" id="CHEBI:30616"/>
    </ligand>
</feature>
<name>CLPX_NITV4</name>
<proteinExistence type="inferred from homology"/>
<protein>
    <recommendedName>
        <fullName evidence="1">ATP-dependent Clp protease ATP-binding subunit ClpX</fullName>
    </recommendedName>
</protein>
<accession>A1VE84</accession>
<organism>
    <name type="scientific">Nitratidesulfovibrio vulgaris (strain DP4)</name>
    <name type="common">Desulfovibrio vulgaris</name>
    <dbReference type="NCBI Taxonomy" id="391774"/>
    <lineage>
        <taxon>Bacteria</taxon>
        <taxon>Pseudomonadati</taxon>
        <taxon>Thermodesulfobacteriota</taxon>
        <taxon>Desulfovibrionia</taxon>
        <taxon>Desulfovibrionales</taxon>
        <taxon>Desulfovibrionaceae</taxon>
        <taxon>Nitratidesulfovibrio</taxon>
    </lineage>
</organism>